<reference evidence="5" key="1">
    <citation type="journal article" date="2002" name="Nature">
        <title>Sequence and analysis of chromosome 2 of Dictyostelium discoideum.</title>
        <authorList>
            <person name="Gloeckner G."/>
            <person name="Eichinger L."/>
            <person name="Szafranski K."/>
            <person name="Pachebat J.A."/>
            <person name="Bankier A.T."/>
            <person name="Dear P.H."/>
            <person name="Lehmann R."/>
            <person name="Baumgart C."/>
            <person name="Parra G."/>
            <person name="Abril J.F."/>
            <person name="Guigo R."/>
            <person name="Kumpf K."/>
            <person name="Tunggal B."/>
            <person name="Cox E.C."/>
            <person name="Quail M.A."/>
            <person name="Platzer M."/>
            <person name="Rosenthal A."/>
            <person name="Noegel A.A."/>
        </authorList>
    </citation>
    <scope>NUCLEOTIDE SEQUENCE [LARGE SCALE GENOMIC DNA]</scope>
    <source>
        <strain>AX4</strain>
    </source>
</reference>
<reference evidence="5 6" key="2">
    <citation type="journal article" date="2005" name="Nature">
        <title>The genome of the social amoeba Dictyostelium discoideum.</title>
        <authorList>
            <person name="Eichinger L."/>
            <person name="Pachebat J.A."/>
            <person name="Gloeckner G."/>
            <person name="Rajandream M.A."/>
            <person name="Sucgang R."/>
            <person name="Berriman M."/>
            <person name="Song J."/>
            <person name="Olsen R."/>
            <person name="Szafranski K."/>
            <person name="Xu Q."/>
            <person name="Tunggal B."/>
            <person name="Kummerfeld S."/>
            <person name="Madera M."/>
            <person name="Konfortov B.A."/>
            <person name="Rivero F."/>
            <person name="Bankier A.T."/>
            <person name="Lehmann R."/>
            <person name="Hamlin N."/>
            <person name="Davies R."/>
            <person name="Gaudet P."/>
            <person name="Fey P."/>
            <person name="Pilcher K."/>
            <person name="Chen G."/>
            <person name="Saunders D."/>
            <person name="Sodergren E.J."/>
            <person name="Davis P."/>
            <person name="Kerhornou A."/>
            <person name="Nie X."/>
            <person name="Hall N."/>
            <person name="Anjard C."/>
            <person name="Hemphill L."/>
            <person name="Bason N."/>
            <person name="Farbrother P."/>
            <person name="Desany B."/>
            <person name="Just E."/>
            <person name="Morio T."/>
            <person name="Rost R."/>
            <person name="Churcher C.M."/>
            <person name="Cooper J."/>
            <person name="Haydock S."/>
            <person name="van Driessche N."/>
            <person name="Cronin A."/>
            <person name="Goodhead I."/>
            <person name="Muzny D.M."/>
            <person name="Mourier T."/>
            <person name="Pain A."/>
            <person name="Lu M."/>
            <person name="Harper D."/>
            <person name="Lindsay R."/>
            <person name="Hauser H."/>
            <person name="James K.D."/>
            <person name="Quiles M."/>
            <person name="Madan Babu M."/>
            <person name="Saito T."/>
            <person name="Buchrieser C."/>
            <person name="Wardroper A."/>
            <person name="Felder M."/>
            <person name="Thangavelu M."/>
            <person name="Johnson D."/>
            <person name="Knights A."/>
            <person name="Loulseged H."/>
            <person name="Mungall K.L."/>
            <person name="Oliver K."/>
            <person name="Price C."/>
            <person name="Quail M.A."/>
            <person name="Urushihara H."/>
            <person name="Hernandez J."/>
            <person name="Rabbinowitsch E."/>
            <person name="Steffen D."/>
            <person name="Sanders M."/>
            <person name="Ma J."/>
            <person name="Kohara Y."/>
            <person name="Sharp S."/>
            <person name="Simmonds M.N."/>
            <person name="Spiegler S."/>
            <person name="Tivey A."/>
            <person name="Sugano S."/>
            <person name="White B."/>
            <person name="Walker D."/>
            <person name="Woodward J.R."/>
            <person name="Winckler T."/>
            <person name="Tanaka Y."/>
            <person name="Shaulsky G."/>
            <person name="Schleicher M."/>
            <person name="Weinstock G.M."/>
            <person name="Rosenthal A."/>
            <person name="Cox E.C."/>
            <person name="Chisholm R.L."/>
            <person name="Gibbs R.A."/>
            <person name="Loomis W.F."/>
            <person name="Platzer M."/>
            <person name="Kay R.R."/>
            <person name="Williams J.G."/>
            <person name="Dear P.H."/>
            <person name="Noegel A.A."/>
            <person name="Barrell B.G."/>
            <person name="Kuspa A."/>
        </authorList>
    </citation>
    <scope>NUCLEOTIDE SEQUENCE [LARGE SCALE GENOMIC DNA]</scope>
    <source>
        <strain evidence="6">AX4</strain>
    </source>
</reference>
<reference key="3">
    <citation type="journal article" date="2004" name="Nucleic Acids Res.">
        <title>Analyses of cDNAs from growth and slug stages of Dictyostelium discoideum.</title>
        <authorList>
            <person name="Urushihara H."/>
            <person name="Morio T."/>
            <person name="Saito T."/>
            <person name="Kohara Y."/>
            <person name="Koriki E."/>
            <person name="Ochiai H."/>
            <person name="Maeda M."/>
            <person name="Williams J.G."/>
            <person name="Takeuchi I."/>
            <person name="Tanaka Y."/>
        </authorList>
    </citation>
    <scope>NUCLEOTIDE SEQUENCE [LARGE SCALE MRNA] OF 1-60 AND 298-438</scope>
    <source>
        <strain>AX4</strain>
    </source>
</reference>
<keyword id="KW-0012">Acyltransferase</keyword>
<keyword id="KW-0325">Glycoprotein</keyword>
<keyword id="KW-0449">Lipoprotein</keyword>
<keyword id="KW-0472">Membrane</keyword>
<keyword id="KW-0564">Palmitate</keyword>
<keyword id="KW-1185">Reference proteome</keyword>
<keyword id="KW-0808">Transferase</keyword>
<keyword id="KW-0812">Transmembrane</keyword>
<keyword id="KW-1133">Transmembrane helix</keyword>
<evidence type="ECO:0000250" key="1"/>
<evidence type="ECO:0000255" key="2"/>
<evidence type="ECO:0000255" key="3">
    <source>
        <dbReference type="PROSITE-ProRule" id="PRU00067"/>
    </source>
</evidence>
<evidence type="ECO:0000256" key="4">
    <source>
        <dbReference type="SAM" id="MobiDB-lite"/>
    </source>
</evidence>
<evidence type="ECO:0000305" key="5"/>
<evidence type="ECO:0000312" key="6">
    <source>
        <dbReference type="EMBL" id="EAL69465.1"/>
    </source>
</evidence>
<accession>Q552M6</accession>
<accession>Q86JC6</accession>
<organism>
    <name type="scientific">Dictyostelium discoideum</name>
    <name type="common">Social amoeba</name>
    <dbReference type="NCBI Taxonomy" id="44689"/>
    <lineage>
        <taxon>Eukaryota</taxon>
        <taxon>Amoebozoa</taxon>
        <taxon>Evosea</taxon>
        <taxon>Eumycetozoa</taxon>
        <taxon>Dictyostelia</taxon>
        <taxon>Dictyosteliales</taxon>
        <taxon>Dictyosteliaceae</taxon>
        <taxon>Dictyostelium</taxon>
    </lineage>
</organism>
<protein>
    <recommendedName>
        <fullName>Putative ZDHHC-type palmitoyltransferase 7</fullName>
        <ecNumber>2.3.1.225</ecNumber>
    </recommendedName>
    <alternativeName>
        <fullName>Zinc finger DHHC domain-containing protein 7</fullName>
    </alternativeName>
</protein>
<feature type="chain" id="PRO_0000262946" description="Putative ZDHHC-type palmitoyltransferase 7">
    <location>
        <begin position="1"/>
        <end position="438"/>
    </location>
</feature>
<feature type="transmembrane region" description="Helical" evidence="2">
    <location>
        <begin position="48"/>
        <end position="68"/>
    </location>
</feature>
<feature type="transmembrane region" description="Helical" evidence="2">
    <location>
        <begin position="77"/>
        <end position="97"/>
    </location>
</feature>
<feature type="transmembrane region" description="Helical" evidence="2">
    <location>
        <begin position="294"/>
        <end position="314"/>
    </location>
</feature>
<feature type="transmembrane region" description="Helical" evidence="2">
    <location>
        <begin position="330"/>
        <end position="350"/>
    </location>
</feature>
<feature type="domain" description="DHHC" evidence="3">
    <location>
        <begin position="249"/>
        <end position="299"/>
    </location>
</feature>
<feature type="region of interest" description="Disordered" evidence="4">
    <location>
        <begin position="183"/>
        <end position="239"/>
    </location>
</feature>
<feature type="compositionally biased region" description="Low complexity" evidence="4">
    <location>
        <begin position="190"/>
        <end position="206"/>
    </location>
</feature>
<feature type="compositionally biased region" description="Low complexity" evidence="4">
    <location>
        <begin position="218"/>
        <end position="234"/>
    </location>
</feature>
<feature type="glycosylation site" description="N-linked (GlcNAc...) asparagine" evidence="2">
    <location>
        <position position="12"/>
    </location>
</feature>
<feature type="glycosylation site" description="N-linked (GlcNAc...) asparagine" evidence="2">
    <location>
        <position position="13"/>
    </location>
</feature>
<feature type="glycosylation site" description="N-linked (GlcNAc...) asparagine" evidence="2">
    <location>
        <position position="119"/>
    </location>
</feature>
<feature type="glycosylation site" description="N-linked (GlcNAc...) asparagine" evidence="2">
    <location>
        <position position="144"/>
    </location>
</feature>
<feature type="glycosylation site" description="N-linked (GlcNAc...) asparagine" evidence="2">
    <location>
        <position position="157"/>
    </location>
</feature>
<feature type="glycosylation site" description="N-linked (GlcNAc...) asparagine" evidence="2">
    <location>
        <position position="231"/>
    </location>
</feature>
<feature type="glycosylation site" description="N-linked (GlcNAc...) asparagine" evidence="2">
    <location>
        <position position="360"/>
    </location>
</feature>
<feature type="sequence conflict" description="In Ref. 3; C91183." evidence="5" ref="3">
    <original>F</original>
    <variation>Y</variation>
    <location>
        <position position="352"/>
    </location>
</feature>
<feature type="sequence conflict" description="In Ref. 3; C91183." evidence="5" ref="3">
    <location>
        <begin position="434"/>
        <end position="438"/>
    </location>
</feature>
<sequence>MKLNSNINNNINNSSNSNNNFDAKNIIVDTITPPDPSVEFERKLAKSIFCLVHFIVYCVIIFRKGTILDQAFKDKDYFYLIWTHCVFFFAIGTYFLISSKRPGFVSLSNQNLNNNNNNNGSSNKFILEDSMGCIPQLNINPTPNYSKISNIKRKLKNSSGDITKNQENEDLVPLMEISKNIDEDSINDDTITTTTTTTTTTSTSTIPEISNDDDDNNNENNNDNVNNRNNNNSNGEKEDNDIDKLKNHYFCKKCLVDIPLRTKHCVKCNRCVLKYDHHCVFIGGCVGLNNHKNFLLFLLAESLLLLLGLRIIVTGFVRENSIKEWIFSNIAIIPPTLLIFGGLCMPFALFCFHSFLILTNQSSWEFNKYQRITYLKPFSKRGINPFNKGPWNNLKKFLKGDENPSDWILLSKYEVDQMKKKEENTFNIWNNKYYSCCG</sequence>
<proteinExistence type="evidence at transcript level"/>
<gene>
    <name type="ORF">DDB_G0276017</name>
</gene>
<comment type="catalytic activity">
    <reaction>
        <text>L-cysteinyl-[protein] + hexadecanoyl-CoA = S-hexadecanoyl-L-cysteinyl-[protein] + CoA</text>
        <dbReference type="Rhea" id="RHEA:36683"/>
        <dbReference type="Rhea" id="RHEA-COMP:10131"/>
        <dbReference type="Rhea" id="RHEA-COMP:11032"/>
        <dbReference type="ChEBI" id="CHEBI:29950"/>
        <dbReference type="ChEBI" id="CHEBI:57287"/>
        <dbReference type="ChEBI" id="CHEBI:57379"/>
        <dbReference type="ChEBI" id="CHEBI:74151"/>
        <dbReference type="EC" id="2.3.1.225"/>
    </reaction>
</comment>
<comment type="subcellular location">
    <subcellularLocation>
        <location evidence="2">Membrane</location>
        <topology evidence="2">Multi-pass membrane protein</topology>
    </subcellularLocation>
</comment>
<comment type="domain">
    <text evidence="1">The DHHC domain is required for palmitoyltransferase activity.</text>
</comment>
<comment type="similarity">
    <text evidence="5">Belongs to the DHHC palmitoyltransferase family.</text>
</comment>
<name>ZDHC7_DICDI</name>
<dbReference type="EC" id="2.3.1.225"/>
<dbReference type="EMBL" id="AAFI02000013">
    <property type="protein sequence ID" value="EAL69465.1"/>
    <property type="molecule type" value="Genomic_DNA"/>
</dbReference>
<dbReference type="EMBL" id="AU074197">
    <property type="status" value="NOT_ANNOTATED_CDS"/>
    <property type="molecule type" value="mRNA"/>
</dbReference>
<dbReference type="EMBL" id="C91183">
    <property type="status" value="NOT_ANNOTATED_CDS"/>
    <property type="molecule type" value="mRNA"/>
</dbReference>
<dbReference type="RefSeq" id="XP_643386.1">
    <property type="nucleotide sequence ID" value="XM_638294.1"/>
</dbReference>
<dbReference type="FunCoup" id="Q552M6">
    <property type="interactions" value="155"/>
</dbReference>
<dbReference type="GlyGen" id="Q552M6">
    <property type="glycosylation" value="8 sites"/>
</dbReference>
<dbReference type="PaxDb" id="44689-DDB0217752"/>
<dbReference type="EnsemblProtists" id="EAL69465">
    <property type="protein sequence ID" value="EAL69465"/>
    <property type="gene ID" value="DDB_G0276017"/>
</dbReference>
<dbReference type="GeneID" id="8620271"/>
<dbReference type="KEGG" id="ddi:DDB_G0276017"/>
<dbReference type="dictyBase" id="DDB_G0276017"/>
<dbReference type="VEuPathDB" id="AmoebaDB:DDB_G0276017"/>
<dbReference type="eggNOG" id="KOG1311">
    <property type="taxonomic scope" value="Eukaryota"/>
</dbReference>
<dbReference type="HOGENOM" id="CLU_626174_0_0_1"/>
<dbReference type="InParanoid" id="Q552M6"/>
<dbReference type="OMA" id="NGTHSES"/>
<dbReference type="PRO" id="PR:Q552M6"/>
<dbReference type="Proteomes" id="UP000002195">
    <property type="component" value="Chromosome 2"/>
</dbReference>
<dbReference type="GO" id="GO:0005783">
    <property type="term" value="C:endoplasmic reticulum"/>
    <property type="evidence" value="ECO:0000318"/>
    <property type="project" value="GO_Central"/>
</dbReference>
<dbReference type="GO" id="GO:0005794">
    <property type="term" value="C:Golgi apparatus"/>
    <property type="evidence" value="ECO:0000318"/>
    <property type="project" value="GO_Central"/>
</dbReference>
<dbReference type="GO" id="GO:0016020">
    <property type="term" value="C:membrane"/>
    <property type="evidence" value="ECO:0007669"/>
    <property type="project" value="UniProtKB-SubCell"/>
</dbReference>
<dbReference type="GO" id="GO:0019706">
    <property type="term" value="F:protein-cysteine S-palmitoyltransferase activity"/>
    <property type="evidence" value="ECO:0000318"/>
    <property type="project" value="GO_Central"/>
</dbReference>
<dbReference type="GO" id="GO:0006612">
    <property type="term" value="P:protein targeting to membrane"/>
    <property type="evidence" value="ECO:0000318"/>
    <property type="project" value="GO_Central"/>
</dbReference>
<dbReference type="InterPro" id="IPR001594">
    <property type="entry name" value="Palmitoyltrfase_DHHC"/>
</dbReference>
<dbReference type="InterPro" id="IPR039859">
    <property type="entry name" value="PFA4/ZDH16/20/ERF2-like"/>
</dbReference>
<dbReference type="PANTHER" id="PTHR22883:SF318">
    <property type="entry name" value="PALMITOYLTRANSFERASE-RELATED"/>
    <property type="match status" value="1"/>
</dbReference>
<dbReference type="PANTHER" id="PTHR22883">
    <property type="entry name" value="ZINC FINGER DHHC DOMAIN CONTAINING PROTEIN"/>
    <property type="match status" value="1"/>
</dbReference>
<dbReference type="Pfam" id="PF01529">
    <property type="entry name" value="DHHC"/>
    <property type="match status" value="1"/>
</dbReference>
<dbReference type="PROSITE" id="PS50216">
    <property type="entry name" value="DHHC"/>
    <property type="match status" value="1"/>
</dbReference>